<protein>
    <recommendedName>
        <fullName evidence="1">Phosphate acyltransferase</fullName>
        <ecNumber evidence="1">2.3.1.274</ecNumber>
    </recommendedName>
    <alternativeName>
        <fullName evidence="1">Acyl-ACP phosphotransacylase</fullName>
    </alternativeName>
    <alternativeName>
        <fullName evidence="1">Acyl-[acyl-carrier-protein]--phosphate acyltransferase</fullName>
    </alternativeName>
    <alternativeName>
        <fullName evidence="1">Phosphate-acyl-ACP acyltransferase</fullName>
    </alternativeName>
</protein>
<sequence>MTTIALDAMGGDHGPKVVVPAALDSLEQNPSLRLVLVGDESVLREYLKDTRRRFGDRLRVHHASEVVEMHDQPSKALRNKKDSSMRVAIDLVKQGDADACVSAGNTGALMAIAKFVLKTLPGIDRPAIIAAVPSMTGHTHVLDLGANVDCTAEHLYQFAVMGYELVRAVEEREHPTVGLLNIGEEEIKGNEQVKRAAELLSGAHVNFVGFVEGDDIFKGSVDIVVTDGFVGNVALKSSEGLAKMISHFIKREFSSSLLTRLAGLIALPVLNAFKHRIDPRQYNGASLLGLRGIVIKSHGNADRFSFANAVTIAVKEVEKAVPHRIGERMTDVFAARNLA</sequence>
<name>PLSX_METCA</name>
<accession>Q606L2</accession>
<dbReference type="EC" id="2.3.1.274" evidence="1"/>
<dbReference type="EMBL" id="AE017282">
    <property type="protein sequence ID" value="AAU91775.1"/>
    <property type="molecule type" value="Genomic_DNA"/>
</dbReference>
<dbReference type="RefSeq" id="WP_010961249.1">
    <property type="nucleotide sequence ID" value="NC_002977.6"/>
</dbReference>
<dbReference type="SMR" id="Q606L2"/>
<dbReference type="STRING" id="243233.MCA2004"/>
<dbReference type="GeneID" id="88224232"/>
<dbReference type="KEGG" id="mca:MCA2004"/>
<dbReference type="eggNOG" id="COG0416">
    <property type="taxonomic scope" value="Bacteria"/>
</dbReference>
<dbReference type="HOGENOM" id="CLU_039379_1_0_6"/>
<dbReference type="UniPathway" id="UPA00085"/>
<dbReference type="Proteomes" id="UP000006821">
    <property type="component" value="Chromosome"/>
</dbReference>
<dbReference type="GO" id="GO:0005737">
    <property type="term" value="C:cytoplasm"/>
    <property type="evidence" value="ECO:0007669"/>
    <property type="project" value="UniProtKB-SubCell"/>
</dbReference>
<dbReference type="GO" id="GO:0043811">
    <property type="term" value="F:phosphate:acyl-[acyl carrier protein] acyltransferase activity"/>
    <property type="evidence" value="ECO:0007669"/>
    <property type="project" value="UniProtKB-UniRule"/>
</dbReference>
<dbReference type="GO" id="GO:0006633">
    <property type="term" value="P:fatty acid biosynthetic process"/>
    <property type="evidence" value="ECO:0007669"/>
    <property type="project" value="UniProtKB-UniRule"/>
</dbReference>
<dbReference type="GO" id="GO:0008654">
    <property type="term" value="P:phospholipid biosynthetic process"/>
    <property type="evidence" value="ECO:0007669"/>
    <property type="project" value="UniProtKB-KW"/>
</dbReference>
<dbReference type="Gene3D" id="3.40.718.10">
    <property type="entry name" value="Isopropylmalate Dehydrogenase"/>
    <property type="match status" value="1"/>
</dbReference>
<dbReference type="HAMAP" id="MF_00019">
    <property type="entry name" value="PlsX"/>
    <property type="match status" value="1"/>
</dbReference>
<dbReference type="InterPro" id="IPR003664">
    <property type="entry name" value="FA_synthesis"/>
</dbReference>
<dbReference type="InterPro" id="IPR012281">
    <property type="entry name" value="Phospholipid_synth_PlsX-like"/>
</dbReference>
<dbReference type="NCBIfam" id="TIGR00182">
    <property type="entry name" value="plsX"/>
    <property type="match status" value="1"/>
</dbReference>
<dbReference type="PANTHER" id="PTHR30100">
    <property type="entry name" value="FATTY ACID/PHOSPHOLIPID SYNTHESIS PROTEIN PLSX"/>
    <property type="match status" value="1"/>
</dbReference>
<dbReference type="PANTHER" id="PTHR30100:SF1">
    <property type="entry name" value="PHOSPHATE ACYLTRANSFERASE"/>
    <property type="match status" value="1"/>
</dbReference>
<dbReference type="Pfam" id="PF02504">
    <property type="entry name" value="FA_synthesis"/>
    <property type="match status" value="1"/>
</dbReference>
<dbReference type="PIRSF" id="PIRSF002465">
    <property type="entry name" value="Phsphlp_syn_PlsX"/>
    <property type="match status" value="1"/>
</dbReference>
<dbReference type="SUPFAM" id="SSF53659">
    <property type="entry name" value="Isocitrate/Isopropylmalate dehydrogenase-like"/>
    <property type="match status" value="1"/>
</dbReference>
<feature type="chain" id="PRO_0000189903" description="Phosphate acyltransferase">
    <location>
        <begin position="1"/>
        <end position="339"/>
    </location>
</feature>
<proteinExistence type="inferred from homology"/>
<evidence type="ECO:0000255" key="1">
    <source>
        <dbReference type="HAMAP-Rule" id="MF_00019"/>
    </source>
</evidence>
<comment type="function">
    <text evidence="1">Catalyzes the reversible formation of acyl-phosphate (acyl-PO(4)) from acyl-[acyl-carrier-protein] (acyl-ACP). This enzyme utilizes acyl-ACP as fatty acyl donor, but not acyl-CoA.</text>
</comment>
<comment type="catalytic activity">
    <reaction evidence="1">
        <text>a fatty acyl-[ACP] + phosphate = an acyl phosphate + holo-[ACP]</text>
        <dbReference type="Rhea" id="RHEA:42292"/>
        <dbReference type="Rhea" id="RHEA-COMP:9685"/>
        <dbReference type="Rhea" id="RHEA-COMP:14125"/>
        <dbReference type="ChEBI" id="CHEBI:43474"/>
        <dbReference type="ChEBI" id="CHEBI:59918"/>
        <dbReference type="ChEBI" id="CHEBI:64479"/>
        <dbReference type="ChEBI" id="CHEBI:138651"/>
        <dbReference type="EC" id="2.3.1.274"/>
    </reaction>
</comment>
<comment type="pathway">
    <text evidence="1">Lipid metabolism; phospholipid metabolism.</text>
</comment>
<comment type="subunit">
    <text evidence="1">Homodimer. Probably interacts with PlsY.</text>
</comment>
<comment type="subcellular location">
    <subcellularLocation>
        <location evidence="1">Cytoplasm</location>
    </subcellularLocation>
    <text evidence="1">Associated with the membrane possibly through PlsY.</text>
</comment>
<comment type="similarity">
    <text evidence="1">Belongs to the PlsX family.</text>
</comment>
<reference key="1">
    <citation type="journal article" date="2004" name="PLoS Biol.">
        <title>Genomic insights into methanotrophy: the complete genome sequence of Methylococcus capsulatus (Bath).</title>
        <authorList>
            <person name="Ward N.L."/>
            <person name="Larsen O."/>
            <person name="Sakwa J."/>
            <person name="Bruseth L."/>
            <person name="Khouri H.M."/>
            <person name="Durkin A.S."/>
            <person name="Dimitrov G."/>
            <person name="Jiang L."/>
            <person name="Scanlan D."/>
            <person name="Kang K.H."/>
            <person name="Lewis M.R."/>
            <person name="Nelson K.E."/>
            <person name="Methe B.A."/>
            <person name="Wu M."/>
            <person name="Heidelberg J.F."/>
            <person name="Paulsen I.T."/>
            <person name="Fouts D.E."/>
            <person name="Ravel J."/>
            <person name="Tettelin H."/>
            <person name="Ren Q."/>
            <person name="Read T.D."/>
            <person name="DeBoy R.T."/>
            <person name="Seshadri R."/>
            <person name="Salzberg S.L."/>
            <person name="Jensen H.B."/>
            <person name="Birkeland N.K."/>
            <person name="Nelson W.C."/>
            <person name="Dodson R.J."/>
            <person name="Grindhaug S.H."/>
            <person name="Holt I.E."/>
            <person name="Eidhammer I."/>
            <person name="Jonasen I."/>
            <person name="Vanaken S."/>
            <person name="Utterback T.R."/>
            <person name="Feldblyum T.V."/>
            <person name="Fraser C.M."/>
            <person name="Lillehaug J.R."/>
            <person name="Eisen J.A."/>
        </authorList>
    </citation>
    <scope>NUCLEOTIDE SEQUENCE [LARGE SCALE GENOMIC DNA]</scope>
    <source>
        <strain>ATCC 33009 / NCIMB 11132 / Bath</strain>
    </source>
</reference>
<gene>
    <name evidence="1" type="primary">plsX</name>
    <name type="ordered locus">MCA2004</name>
</gene>
<keyword id="KW-0963">Cytoplasm</keyword>
<keyword id="KW-0444">Lipid biosynthesis</keyword>
<keyword id="KW-0443">Lipid metabolism</keyword>
<keyword id="KW-0594">Phospholipid biosynthesis</keyword>
<keyword id="KW-1208">Phospholipid metabolism</keyword>
<keyword id="KW-1185">Reference proteome</keyword>
<keyword id="KW-0808">Transferase</keyword>
<organism>
    <name type="scientific">Methylococcus capsulatus (strain ATCC 33009 / NCIMB 11132 / Bath)</name>
    <dbReference type="NCBI Taxonomy" id="243233"/>
    <lineage>
        <taxon>Bacteria</taxon>
        <taxon>Pseudomonadati</taxon>
        <taxon>Pseudomonadota</taxon>
        <taxon>Gammaproteobacteria</taxon>
        <taxon>Methylococcales</taxon>
        <taxon>Methylococcaceae</taxon>
        <taxon>Methylococcus</taxon>
    </lineage>
</organism>